<protein>
    <recommendedName>
        <fullName>Germin-like protein subfamily T member 3</fullName>
    </recommendedName>
</protein>
<name>GLT3_ARATH</name>
<dbReference type="EMBL" id="AC008263">
    <property type="protein sequence ID" value="AAD55294.1"/>
    <property type="molecule type" value="Genomic_DNA"/>
</dbReference>
<dbReference type="EMBL" id="AC013258">
    <property type="protein sequence ID" value="AAG51910.1"/>
    <property type="molecule type" value="Genomic_DNA"/>
</dbReference>
<dbReference type="EMBL" id="CP002684">
    <property type="protein sequence ID" value="AEE35635.1"/>
    <property type="molecule type" value="Genomic_DNA"/>
</dbReference>
<dbReference type="EMBL" id="DQ446430">
    <property type="protein sequence ID" value="ABE65773.1"/>
    <property type="molecule type" value="mRNA"/>
</dbReference>
<dbReference type="PIR" id="F96777">
    <property type="entry name" value="F96777"/>
</dbReference>
<dbReference type="RefSeq" id="NP_177620.1">
    <property type="nucleotide sequence ID" value="NM_106140.3"/>
</dbReference>
<dbReference type="SMR" id="Q9S772"/>
<dbReference type="FunCoup" id="Q9S772">
    <property type="interactions" value="31"/>
</dbReference>
<dbReference type="STRING" id="3702.Q9S772"/>
<dbReference type="GlyGen" id="Q9S772">
    <property type="glycosylation" value="2 sites"/>
</dbReference>
<dbReference type="PaxDb" id="3702-AT1G74820.1"/>
<dbReference type="EnsemblPlants" id="AT1G74820.1">
    <property type="protein sequence ID" value="AT1G74820.1"/>
    <property type="gene ID" value="AT1G74820"/>
</dbReference>
<dbReference type="GeneID" id="843821"/>
<dbReference type="Gramene" id="AT1G74820.1">
    <property type="protein sequence ID" value="AT1G74820.1"/>
    <property type="gene ID" value="AT1G74820"/>
</dbReference>
<dbReference type="KEGG" id="ath:AT1G74820"/>
<dbReference type="Araport" id="AT1G74820"/>
<dbReference type="TAIR" id="AT1G74820"/>
<dbReference type="eggNOG" id="ENOG502QSRM">
    <property type="taxonomic scope" value="Eukaryota"/>
</dbReference>
<dbReference type="HOGENOM" id="CLU_015790_0_3_1"/>
<dbReference type="InParanoid" id="Q9S772"/>
<dbReference type="OMA" id="MAHISQI"/>
<dbReference type="OrthoDB" id="1031255at2759"/>
<dbReference type="PhylomeDB" id="Q9S772"/>
<dbReference type="PRO" id="PR:Q9S772"/>
<dbReference type="Proteomes" id="UP000006548">
    <property type="component" value="Chromosome 1"/>
</dbReference>
<dbReference type="ExpressionAtlas" id="Q9S772">
    <property type="expression patterns" value="baseline and differential"/>
</dbReference>
<dbReference type="GO" id="GO:0048046">
    <property type="term" value="C:apoplast"/>
    <property type="evidence" value="ECO:0007669"/>
    <property type="project" value="UniProtKB-SubCell"/>
</dbReference>
<dbReference type="GO" id="GO:0030145">
    <property type="term" value="F:manganese ion binding"/>
    <property type="evidence" value="ECO:0007669"/>
    <property type="project" value="InterPro"/>
</dbReference>
<dbReference type="CDD" id="cd02241">
    <property type="entry name" value="cupin_OxOx"/>
    <property type="match status" value="1"/>
</dbReference>
<dbReference type="Gene3D" id="2.60.120.10">
    <property type="entry name" value="Jelly Rolls"/>
    <property type="match status" value="1"/>
</dbReference>
<dbReference type="InterPro" id="IPR006045">
    <property type="entry name" value="Cupin_1"/>
</dbReference>
<dbReference type="InterPro" id="IPR001929">
    <property type="entry name" value="Germin"/>
</dbReference>
<dbReference type="InterPro" id="IPR014710">
    <property type="entry name" value="RmlC-like_jellyroll"/>
</dbReference>
<dbReference type="InterPro" id="IPR011051">
    <property type="entry name" value="RmlC_Cupin_sf"/>
</dbReference>
<dbReference type="PANTHER" id="PTHR31238">
    <property type="entry name" value="GERMIN-LIKE PROTEIN SUBFAMILY 3 MEMBER 3"/>
    <property type="match status" value="1"/>
</dbReference>
<dbReference type="Pfam" id="PF00190">
    <property type="entry name" value="Cupin_1"/>
    <property type="match status" value="1"/>
</dbReference>
<dbReference type="PRINTS" id="PR00325">
    <property type="entry name" value="GERMIN"/>
</dbReference>
<dbReference type="SMART" id="SM00835">
    <property type="entry name" value="Cupin_1"/>
    <property type="match status" value="1"/>
</dbReference>
<dbReference type="SUPFAM" id="SSF51182">
    <property type="entry name" value="RmlC-like cupins"/>
    <property type="match status" value="1"/>
</dbReference>
<organism>
    <name type="scientific">Arabidopsis thaliana</name>
    <name type="common">Mouse-ear cress</name>
    <dbReference type="NCBI Taxonomy" id="3702"/>
    <lineage>
        <taxon>Eukaryota</taxon>
        <taxon>Viridiplantae</taxon>
        <taxon>Streptophyta</taxon>
        <taxon>Embryophyta</taxon>
        <taxon>Tracheophyta</taxon>
        <taxon>Spermatophyta</taxon>
        <taxon>Magnoliopsida</taxon>
        <taxon>eudicotyledons</taxon>
        <taxon>Gunneridae</taxon>
        <taxon>Pentapetalae</taxon>
        <taxon>rosids</taxon>
        <taxon>malvids</taxon>
        <taxon>Brassicales</taxon>
        <taxon>Brassicaceae</taxon>
        <taxon>Camelineae</taxon>
        <taxon>Arabidopsis</taxon>
    </lineage>
</organism>
<gene>
    <name type="ordered locus">At1g74820</name>
    <name type="ORF">F25A4.21</name>
    <name type="ORF">F9E10.33</name>
</gene>
<accession>Q9S772</accession>
<accession>Q1PFD3</accession>
<evidence type="ECO:0000250" key="1"/>
<evidence type="ECO:0000255" key="2"/>
<evidence type="ECO:0000305" key="3"/>
<proteinExistence type="evidence at transcript level"/>
<feature type="signal peptide" evidence="2">
    <location>
        <begin position="1"/>
        <end position="26"/>
    </location>
</feature>
<feature type="chain" id="PRO_0000010832" description="Germin-like protein subfamily T member 3">
    <location>
        <begin position="27"/>
        <end position="227"/>
    </location>
</feature>
<feature type="domain" description="Cupin type-1" evidence="2">
    <location>
        <begin position="71"/>
        <end position="219"/>
    </location>
</feature>
<feature type="binding site" evidence="1">
    <location>
        <position position="119"/>
    </location>
    <ligand>
        <name>Mn(2+)</name>
        <dbReference type="ChEBI" id="CHEBI:29035"/>
    </ligand>
</feature>
<feature type="binding site" evidence="1">
    <location>
        <position position="121"/>
    </location>
    <ligand>
        <name>Mn(2+)</name>
        <dbReference type="ChEBI" id="CHEBI:29035"/>
    </ligand>
</feature>
<feature type="binding site" evidence="1">
    <location>
        <position position="126"/>
    </location>
    <ligand>
        <name>Mn(2+)</name>
        <dbReference type="ChEBI" id="CHEBI:29035"/>
    </ligand>
</feature>
<feature type="binding site" evidence="1">
    <location>
        <position position="165"/>
    </location>
    <ligand>
        <name>Mn(2+)</name>
        <dbReference type="ChEBI" id="CHEBI:29035"/>
    </ligand>
</feature>
<feature type="glycosylation site" description="N-linked (GlcNAc...) asparagine" evidence="2">
    <location>
        <position position="78"/>
    </location>
</feature>
<feature type="glycosylation site" description="N-linked (GlcNAc...) asparagine" evidence="2">
    <location>
        <position position="143"/>
    </location>
</feature>
<feature type="disulfide bond" evidence="1">
    <location>
        <begin position="44"/>
        <end position="59"/>
    </location>
</feature>
<sequence>MAHISQISSFLSIVLIFLALCITLFTNPTLSLPALKLNPFQDFCVADLQATPTNSGYPCKSQVTSEDFFYSGLNTPLNTSNPKGIAANPANLLTFPGLNTLGISMYNVAIAPGGYNQPHSHPGVTEAGVVIEGSVLVGFLTTNYTLYSKVIGPGDMFVIPPGLIHYEGNVGKTQCRLLTVVADDLPSEVGVPHTLLATKPAIPNEVLISAFKADSKTINMLRSKFTA</sequence>
<reference key="1">
    <citation type="journal article" date="2000" name="Nature">
        <title>Sequence and analysis of chromosome 1 of the plant Arabidopsis thaliana.</title>
        <authorList>
            <person name="Theologis A."/>
            <person name="Ecker J.R."/>
            <person name="Palm C.J."/>
            <person name="Federspiel N.A."/>
            <person name="Kaul S."/>
            <person name="White O."/>
            <person name="Alonso J."/>
            <person name="Altafi H."/>
            <person name="Araujo R."/>
            <person name="Bowman C.L."/>
            <person name="Brooks S.Y."/>
            <person name="Buehler E."/>
            <person name="Chan A."/>
            <person name="Chao Q."/>
            <person name="Chen H."/>
            <person name="Cheuk R.F."/>
            <person name="Chin C.W."/>
            <person name="Chung M.K."/>
            <person name="Conn L."/>
            <person name="Conway A.B."/>
            <person name="Conway A.R."/>
            <person name="Creasy T.H."/>
            <person name="Dewar K."/>
            <person name="Dunn P."/>
            <person name="Etgu P."/>
            <person name="Feldblyum T.V."/>
            <person name="Feng J.-D."/>
            <person name="Fong B."/>
            <person name="Fujii C.Y."/>
            <person name="Gill J.E."/>
            <person name="Goldsmith A.D."/>
            <person name="Haas B."/>
            <person name="Hansen N.F."/>
            <person name="Hughes B."/>
            <person name="Huizar L."/>
            <person name="Hunter J.L."/>
            <person name="Jenkins J."/>
            <person name="Johnson-Hopson C."/>
            <person name="Khan S."/>
            <person name="Khaykin E."/>
            <person name="Kim C.J."/>
            <person name="Koo H.L."/>
            <person name="Kremenetskaia I."/>
            <person name="Kurtz D.B."/>
            <person name="Kwan A."/>
            <person name="Lam B."/>
            <person name="Langin-Hooper S."/>
            <person name="Lee A."/>
            <person name="Lee J.M."/>
            <person name="Lenz C.A."/>
            <person name="Li J.H."/>
            <person name="Li Y.-P."/>
            <person name="Lin X."/>
            <person name="Liu S.X."/>
            <person name="Liu Z.A."/>
            <person name="Luros J.S."/>
            <person name="Maiti R."/>
            <person name="Marziali A."/>
            <person name="Militscher J."/>
            <person name="Miranda M."/>
            <person name="Nguyen M."/>
            <person name="Nierman W.C."/>
            <person name="Osborne B.I."/>
            <person name="Pai G."/>
            <person name="Peterson J."/>
            <person name="Pham P.K."/>
            <person name="Rizzo M."/>
            <person name="Rooney T."/>
            <person name="Rowley D."/>
            <person name="Sakano H."/>
            <person name="Salzberg S.L."/>
            <person name="Schwartz J.R."/>
            <person name="Shinn P."/>
            <person name="Southwick A.M."/>
            <person name="Sun H."/>
            <person name="Tallon L.J."/>
            <person name="Tambunga G."/>
            <person name="Toriumi M.J."/>
            <person name="Town C.D."/>
            <person name="Utterback T."/>
            <person name="Van Aken S."/>
            <person name="Vaysberg M."/>
            <person name="Vysotskaia V.S."/>
            <person name="Walker M."/>
            <person name="Wu D."/>
            <person name="Yu G."/>
            <person name="Fraser C.M."/>
            <person name="Venter J.C."/>
            <person name="Davis R.W."/>
        </authorList>
    </citation>
    <scope>NUCLEOTIDE SEQUENCE [LARGE SCALE GENOMIC DNA]</scope>
    <source>
        <strain>cv. Columbia</strain>
    </source>
</reference>
<reference key="2">
    <citation type="journal article" date="2017" name="Plant J.">
        <title>Araport11: a complete reannotation of the Arabidopsis thaliana reference genome.</title>
        <authorList>
            <person name="Cheng C.Y."/>
            <person name="Krishnakumar V."/>
            <person name="Chan A.P."/>
            <person name="Thibaud-Nissen F."/>
            <person name="Schobel S."/>
            <person name="Town C.D."/>
        </authorList>
    </citation>
    <scope>GENOME REANNOTATION</scope>
    <source>
        <strain>cv. Columbia</strain>
    </source>
</reference>
<reference key="3">
    <citation type="journal article" date="2006" name="Plant Biotechnol. J.">
        <title>Simultaneous high-throughput recombinational cloning of open reading frames in closed and open configurations.</title>
        <authorList>
            <person name="Underwood B.A."/>
            <person name="Vanderhaeghen R."/>
            <person name="Whitford R."/>
            <person name="Town C.D."/>
            <person name="Hilson P."/>
        </authorList>
    </citation>
    <scope>NUCLEOTIDE SEQUENCE [LARGE SCALE MRNA]</scope>
    <source>
        <strain>cv. Columbia</strain>
    </source>
</reference>
<comment type="function">
    <text>May play a role in plant defense. Probably has no oxalate oxidase activity even if the active site is conserved.</text>
</comment>
<comment type="subunit">
    <text evidence="1">Oligomer (believed to be a pentamer but probably hexamer).</text>
</comment>
<comment type="subcellular location">
    <subcellularLocation>
        <location evidence="1">Secreted</location>
        <location evidence="1">Extracellular space</location>
        <location evidence="1">Apoplast</location>
    </subcellularLocation>
</comment>
<comment type="similarity">
    <text evidence="3">Belongs to the germin family.</text>
</comment>
<keyword id="KW-0052">Apoplast</keyword>
<keyword id="KW-1015">Disulfide bond</keyword>
<keyword id="KW-0325">Glycoprotein</keyword>
<keyword id="KW-0464">Manganese</keyword>
<keyword id="KW-0479">Metal-binding</keyword>
<keyword id="KW-1185">Reference proteome</keyword>
<keyword id="KW-0964">Secreted</keyword>
<keyword id="KW-0732">Signal</keyword>